<feature type="chain" id="PRO_0000082657" description="Ras-like protein">
    <location>
        <begin position="1" status="less than"/>
        <end position="175"/>
    </location>
</feature>
<feature type="propeptide" id="PRO_0000281307" description="Removed in mature form" evidence="1">
    <location>
        <begin position="176"/>
        <end position="178"/>
    </location>
</feature>
<feature type="short sequence motif" description="Effector region">
    <location>
        <begin position="21"/>
        <end position="29"/>
    </location>
</feature>
<feature type="binding site" evidence="1">
    <location>
        <begin position="1" status="less than"/>
        <end position="6"/>
    </location>
    <ligand>
        <name>GTP</name>
        <dbReference type="ChEBI" id="CHEBI:37565"/>
    </ligand>
</feature>
<feature type="binding site" evidence="1">
    <location>
        <begin position="46"/>
        <end position="50"/>
    </location>
    <ligand>
        <name>GTP</name>
        <dbReference type="ChEBI" id="CHEBI:37565"/>
    </ligand>
</feature>
<feature type="binding site" evidence="1">
    <location>
        <begin position="105"/>
        <end position="108"/>
    </location>
    <ligand>
        <name>GTP</name>
        <dbReference type="ChEBI" id="CHEBI:37565"/>
    </ligand>
</feature>
<feature type="modified residue" description="Cysteine methyl ester" evidence="1">
    <location>
        <position position="175"/>
    </location>
</feature>
<feature type="lipid moiety-binding region" description="S-geranylgeranyl cysteine" evidence="1">
    <location>
        <position position="175"/>
    </location>
</feature>
<feature type="non-terminal residue">
    <location>
        <position position="1"/>
    </location>
</feature>
<name>RAS_ARTSA</name>
<dbReference type="EC" id="3.6.5.2" evidence="2"/>
<dbReference type="EMBL" id="M27887">
    <property type="protein sequence ID" value="AAC83399.1"/>
    <property type="molecule type" value="Genomic_DNA"/>
</dbReference>
<dbReference type="SMR" id="P18262"/>
<dbReference type="GO" id="GO:0005886">
    <property type="term" value="C:plasma membrane"/>
    <property type="evidence" value="ECO:0007669"/>
    <property type="project" value="UniProtKB-SubCell"/>
</dbReference>
<dbReference type="GO" id="GO:0003925">
    <property type="term" value="F:G protein activity"/>
    <property type="evidence" value="ECO:0007669"/>
    <property type="project" value="UniProtKB-EC"/>
</dbReference>
<dbReference type="GO" id="GO:0005525">
    <property type="term" value="F:GTP binding"/>
    <property type="evidence" value="ECO:0007669"/>
    <property type="project" value="UniProtKB-KW"/>
</dbReference>
<dbReference type="GO" id="GO:0007165">
    <property type="term" value="P:signal transduction"/>
    <property type="evidence" value="ECO:0007669"/>
    <property type="project" value="InterPro"/>
</dbReference>
<dbReference type="CDD" id="cd04138">
    <property type="entry name" value="H_N_K_Ras_like"/>
    <property type="match status" value="1"/>
</dbReference>
<dbReference type="FunFam" id="3.40.50.300:FF:000096">
    <property type="entry name" value="KRAS proto-oncogene, GTPase"/>
    <property type="match status" value="1"/>
</dbReference>
<dbReference type="Gene3D" id="3.40.50.300">
    <property type="entry name" value="P-loop containing nucleotide triphosphate hydrolases"/>
    <property type="match status" value="1"/>
</dbReference>
<dbReference type="InterPro" id="IPR027417">
    <property type="entry name" value="P-loop_NTPase"/>
</dbReference>
<dbReference type="InterPro" id="IPR005225">
    <property type="entry name" value="Small_GTP-bd"/>
</dbReference>
<dbReference type="InterPro" id="IPR001806">
    <property type="entry name" value="Small_GTPase"/>
</dbReference>
<dbReference type="InterPro" id="IPR020849">
    <property type="entry name" value="Small_GTPase_Ras-type"/>
</dbReference>
<dbReference type="NCBIfam" id="TIGR00231">
    <property type="entry name" value="small_GTP"/>
    <property type="match status" value="1"/>
</dbReference>
<dbReference type="PANTHER" id="PTHR24070">
    <property type="entry name" value="RAS, DI-RAS, AND RHEB FAMILY MEMBERS OF SMALL GTPASE SUPERFAMILY"/>
    <property type="match status" value="1"/>
</dbReference>
<dbReference type="Pfam" id="PF00071">
    <property type="entry name" value="Ras"/>
    <property type="match status" value="1"/>
</dbReference>
<dbReference type="PRINTS" id="PR00449">
    <property type="entry name" value="RASTRNSFRMNG"/>
</dbReference>
<dbReference type="SMART" id="SM00175">
    <property type="entry name" value="RAB"/>
    <property type="match status" value="1"/>
</dbReference>
<dbReference type="SMART" id="SM00173">
    <property type="entry name" value="RAS"/>
    <property type="match status" value="1"/>
</dbReference>
<dbReference type="SMART" id="SM00174">
    <property type="entry name" value="RHO"/>
    <property type="match status" value="1"/>
</dbReference>
<dbReference type="SUPFAM" id="SSF52540">
    <property type="entry name" value="P-loop containing nucleoside triphosphate hydrolases"/>
    <property type="match status" value="1"/>
</dbReference>
<dbReference type="PROSITE" id="PS51421">
    <property type="entry name" value="RAS"/>
    <property type="match status" value="1"/>
</dbReference>
<accession>P18262</accession>
<organism>
    <name type="scientific">Artemia salina</name>
    <name type="common">Brine shrimp</name>
    <dbReference type="NCBI Taxonomy" id="85549"/>
    <lineage>
        <taxon>Eukaryota</taxon>
        <taxon>Metazoa</taxon>
        <taxon>Ecdysozoa</taxon>
        <taxon>Arthropoda</taxon>
        <taxon>Crustacea</taxon>
        <taxon>Branchiopoda</taxon>
        <taxon>Anostraca</taxon>
        <taxon>Artemiidae</taxon>
        <taxon>Artemia</taxon>
    </lineage>
</organism>
<proteinExistence type="inferred from homology"/>
<protein>
    <recommendedName>
        <fullName>Ras-like protein</fullName>
        <ecNumber evidence="2">3.6.5.2</ecNumber>
    </recommendedName>
</protein>
<evidence type="ECO:0000250" key="1"/>
<evidence type="ECO:0000250" key="2">
    <source>
        <dbReference type="UniProtKB" id="P01112"/>
    </source>
</evidence>
<evidence type="ECO:0000305" key="3"/>
<reference key="1">
    <citation type="journal article" date="1989" name="Biochem. Biophys. Res. Commun.">
        <title>Differential expression of a gene highly homologous to c-ras during the development of the brine shrimp Artemia.</title>
        <authorList>
            <person name="Diaz-Guerra M."/>
            <person name="Quintanilla M."/>
            <person name="Palmero I."/>
            <person name="Sastre L."/>
            <person name="Renart J."/>
        </authorList>
    </citation>
    <scope>NUCLEOTIDE SEQUENCE [GENOMIC DNA]</scope>
</reference>
<keyword id="KW-1003">Cell membrane</keyword>
<keyword id="KW-0342">GTP-binding</keyword>
<keyword id="KW-0378">Hydrolase</keyword>
<keyword id="KW-0449">Lipoprotein</keyword>
<keyword id="KW-0472">Membrane</keyword>
<keyword id="KW-0488">Methylation</keyword>
<keyword id="KW-0547">Nucleotide-binding</keyword>
<keyword id="KW-0636">Prenylation</keyword>
<comment type="function">
    <text>Ras proteins bind GDP/GTP and possess intrinsic GTPase activity.</text>
</comment>
<comment type="catalytic activity">
    <reaction evidence="2">
        <text>GTP + H2O = GDP + phosphate + H(+)</text>
        <dbReference type="Rhea" id="RHEA:19669"/>
        <dbReference type="ChEBI" id="CHEBI:15377"/>
        <dbReference type="ChEBI" id="CHEBI:15378"/>
        <dbReference type="ChEBI" id="CHEBI:37565"/>
        <dbReference type="ChEBI" id="CHEBI:43474"/>
        <dbReference type="ChEBI" id="CHEBI:58189"/>
        <dbReference type="EC" id="3.6.5.2"/>
    </reaction>
</comment>
<comment type="activity regulation">
    <text>Alternates between an inactive form bound to GDP and an active form bound to GTP. Activated by a guanine nucleotide-exchange factor (GEF) and inactivated by a GTPase-activating protein (GAP).</text>
</comment>
<comment type="subcellular location">
    <subcellularLocation>
        <location evidence="3">Cell membrane</location>
        <topology evidence="3">Lipid-anchor</topology>
        <orientation evidence="3">Cytoplasmic side</orientation>
    </subcellularLocation>
</comment>
<comment type="similarity">
    <text evidence="3">Belongs to the small GTPase superfamily. Ras family.</text>
</comment>
<sequence length="178" mass="20085">GGVGKSALTIQLIQNHFVDEYDPTIEDSYRQQVVIDGETCLLDILDTAGQEEYSAMRDQYMRTGEGFLLVFAVNNAKSFEDISAYREQIKRVKDAEEVPMVLVGNKCDLPTRAVDMSQAREVARQYGIPFVETSAKTRMGVDDGFYTLVREIKKDKMKKGNSSRRGRSGRKQLKCSIL</sequence>